<sequence length="280" mass="32342">MEVIRIPRIMREISKELRFKGKSIGFIPTMGALHEGHLSLIRRAKEENDIVIVSIFVNPTQFAQGEDYEKYPRDVELDKEKLEALAIDYLFLPDVNSLYPEGYSTYVVVEGLSDKLCGIFRPGHFRGVATIVCKLFNIVKPLRAYFGQKDYQQSLIIRRMVEDLNFDVEIIVCPTVREQDGLAMSSRNLYLNEKERQSATVIYKALKEGERLLNEGEKPLDVKLKMHEIFKNEPLIREIQYAGVYDPLTLEEVKERQNKYLLAVALKIGDTRLIDNLIVE</sequence>
<reference key="1">
    <citation type="submission" date="2008-08" db="EMBL/GenBank/DDBJ databases">
        <title>The complete genome sequence of Thermodesulfovibrio yellowstonii strain ATCC 51303 / DSM 11347 / YP87.</title>
        <authorList>
            <person name="Dodson R.J."/>
            <person name="Durkin A.S."/>
            <person name="Wu M."/>
            <person name="Eisen J."/>
            <person name="Sutton G."/>
        </authorList>
    </citation>
    <scope>NUCLEOTIDE SEQUENCE [LARGE SCALE GENOMIC DNA]</scope>
    <source>
        <strain>ATCC 51303 / DSM 11347 / YP87</strain>
    </source>
</reference>
<name>PANC_THEYD</name>
<dbReference type="EC" id="6.3.2.1" evidence="1"/>
<dbReference type="EMBL" id="CP001147">
    <property type="protein sequence ID" value="ACI22055.1"/>
    <property type="molecule type" value="Genomic_DNA"/>
</dbReference>
<dbReference type="RefSeq" id="WP_012546748.1">
    <property type="nucleotide sequence ID" value="NC_011296.1"/>
</dbReference>
<dbReference type="RefSeq" id="YP_002248306.1">
    <property type="nucleotide sequence ID" value="NC_011296.1"/>
</dbReference>
<dbReference type="SMR" id="B5YJ91"/>
<dbReference type="FunCoup" id="B5YJ91">
    <property type="interactions" value="441"/>
</dbReference>
<dbReference type="STRING" id="289376.THEYE_A0461"/>
<dbReference type="EnsemblBacteria" id="ACI22055">
    <property type="protein sequence ID" value="ACI22055"/>
    <property type="gene ID" value="THEYE_A0461"/>
</dbReference>
<dbReference type="KEGG" id="tye:THEYE_A0461"/>
<dbReference type="PATRIC" id="fig|289376.4.peg.456"/>
<dbReference type="eggNOG" id="COG0414">
    <property type="taxonomic scope" value="Bacteria"/>
</dbReference>
<dbReference type="HOGENOM" id="CLU_047148_0_0_0"/>
<dbReference type="InParanoid" id="B5YJ91"/>
<dbReference type="OrthoDB" id="9773087at2"/>
<dbReference type="UniPathway" id="UPA00028">
    <property type="reaction ID" value="UER00005"/>
</dbReference>
<dbReference type="Proteomes" id="UP000000718">
    <property type="component" value="Chromosome"/>
</dbReference>
<dbReference type="GO" id="GO:0005829">
    <property type="term" value="C:cytosol"/>
    <property type="evidence" value="ECO:0000318"/>
    <property type="project" value="GO_Central"/>
</dbReference>
<dbReference type="GO" id="GO:0005524">
    <property type="term" value="F:ATP binding"/>
    <property type="evidence" value="ECO:0007669"/>
    <property type="project" value="UniProtKB-KW"/>
</dbReference>
<dbReference type="GO" id="GO:0004592">
    <property type="term" value="F:pantoate-beta-alanine ligase activity"/>
    <property type="evidence" value="ECO:0000318"/>
    <property type="project" value="GO_Central"/>
</dbReference>
<dbReference type="GO" id="GO:0015940">
    <property type="term" value="P:pantothenate biosynthetic process"/>
    <property type="evidence" value="ECO:0000318"/>
    <property type="project" value="GO_Central"/>
</dbReference>
<dbReference type="CDD" id="cd00560">
    <property type="entry name" value="PanC"/>
    <property type="match status" value="1"/>
</dbReference>
<dbReference type="FunFam" id="3.40.50.620:FF:000013">
    <property type="entry name" value="Pantothenate synthetase"/>
    <property type="match status" value="1"/>
</dbReference>
<dbReference type="Gene3D" id="3.40.50.620">
    <property type="entry name" value="HUPs"/>
    <property type="match status" value="1"/>
</dbReference>
<dbReference type="Gene3D" id="3.30.1300.10">
    <property type="entry name" value="Pantoate-beta-alanine ligase, C-terminal domain"/>
    <property type="match status" value="1"/>
</dbReference>
<dbReference type="HAMAP" id="MF_00158">
    <property type="entry name" value="PanC"/>
    <property type="match status" value="1"/>
</dbReference>
<dbReference type="InterPro" id="IPR004821">
    <property type="entry name" value="Cyt_trans-like"/>
</dbReference>
<dbReference type="InterPro" id="IPR003721">
    <property type="entry name" value="Pantoate_ligase"/>
</dbReference>
<dbReference type="InterPro" id="IPR042176">
    <property type="entry name" value="Pantoate_ligase_C"/>
</dbReference>
<dbReference type="InterPro" id="IPR014729">
    <property type="entry name" value="Rossmann-like_a/b/a_fold"/>
</dbReference>
<dbReference type="NCBIfam" id="TIGR00125">
    <property type="entry name" value="cyt_tran_rel"/>
    <property type="match status" value="1"/>
</dbReference>
<dbReference type="NCBIfam" id="TIGR00018">
    <property type="entry name" value="panC"/>
    <property type="match status" value="1"/>
</dbReference>
<dbReference type="PANTHER" id="PTHR21299">
    <property type="entry name" value="CYTIDYLATE KINASE/PANTOATE-BETA-ALANINE LIGASE"/>
    <property type="match status" value="1"/>
</dbReference>
<dbReference type="PANTHER" id="PTHR21299:SF1">
    <property type="entry name" value="PANTOATE--BETA-ALANINE LIGASE"/>
    <property type="match status" value="1"/>
</dbReference>
<dbReference type="Pfam" id="PF02569">
    <property type="entry name" value="Pantoate_ligase"/>
    <property type="match status" value="1"/>
</dbReference>
<dbReference type="SUPFAM" id="SSF52374">
    <property type="entry name" value="Nucleotidylyl transferase"/>
    <property type="match status" value="1"/>
</dbReference>
<comment type="function">
    <text evidence="1">Catalyzes the condensation of pantoate with beta-alanine in an ATP-dependent reaction via a pantoyl-adenylate intermediate.</text>
</comment>
<comment type="catalytic activity">
    <reaction evidence="1">
        <text>(R)-pantoate + beta-alanine + ATP = (R)-pantothenate + AMP + diphosphate + H(+)</text>
        <dbReference type="Rhea" id="RHEA:10912"/>
        <dbReference type="ChEBI" id="CHEBI:15378"/>
        <dbReference type="ChEBI" id="CHEBI:15980"/>
        <dbReference type="ChEBI" id="CHEBI:29032"/>
        <dbReference type="ChEBI" id="CHEBI:30616"/>
        <dbReference type="ChEBI" id="CHEBI:33019"/>
        <dbReference type="ChEBI" id="CHEBI:57966"/>
        <dbReference type="ChEBI" id="CHEBI:456215"/>
        <dbReference type="EC" id="6.3.2.1"/>
    </reaction>
</comment>
<comment type="pathway">
    <text evidence="1">Cofactor biosynthesis; (R)-pantothenate biosynthesis; (R)-pantothenate from (R)-pantoate and beta-alanine: step 1/1.</text>
</comment>
<comment type="subunit">
    <text evidence="1">Homodimer.</text>
</comment>
<comment type="subcellular location">
    <subcellularLocation>
        <location evidence="1">Cytoplasm</location>
    </subcellularLocation>
</comment>
<comment type="miscellaneous">
    <text evidence="1">The reaction proceeds by a bi uni uni bi ping pong mechanism.</text>
</comment>
<comment type="similarity">
    <text evidence="1">Belongs to the pantothenate synthetase family.</text>
</comment>
<evidence type="ECO:0000255" key="1">
    <source>
        <dbReference type="HAMAP-Rule" id="MF_00158"/>
    </source>
</evidence>
<protein>
    <recommendedName>
        <fullName evidence="1">Pantothenate synthetase</fullName>
        <shortName evidence="1">PS</shortName>
        <ecNumber evidence="1">6.3.2.1</ecNumber>
    </recommendedName>
    <alternativeName>
        <fullName evidence="1">Pantoate--beta-alanine ligase</fullName>
    </alternativeName>
    <alternativeName>
        <fullName evidence="1">Pantoate-activating enzyme</fullName>
    </alternativeName>
</protein>
<feature type="chain" id="PRO_1000097123" description="Pantothenate synthetase">
    <location>
        <begin position="1"/>
        <end position="280"/>
    </location>
</feature>
<feature type="active site" description="Proton donor" evidence="1">
    <location>
        <position position="37"/>
    </location>
</feature>
<feature type="binding site" evidence="1">
    <location>
        <begin position="30"/>
        <end position="37"/>
    </location>
    <ligand>
        <name>ATP</name>
        <dbReference type="ChEBI" id="CHEBI:30616"/>
    </ligand>
</feature>
<feature type="binding site" evidence="1">
    <location>
        <position position="61"/>
    </location>
    <ligand>
        <name>(R)-pantoate</name>
        <dbReference type="ChEBI" id="CHEBI:15980"/>
    </ligand>
</feature>
<feature type="binding site" evidence="1">
    <location>
        <position position="61"/>
    </location>
    <ligand>
        <name>beta-alanine</name>
        <dbReference type="ChEBI" id="CHEBI:57966"/>
    </ligand>
</feature>
<feature type="binding site" evidence="1">
    <location>
        <begin position="147"/>
        <end position="150"/>
    </location>
    <ligand>
        <name>ATP</name>
        <dbReference type="ChEBI" id="CHEBI:30616"/>
    </ligand>
</feature>
<feature type="binding site" evidence="1">
    <location>
        <position position="153"/>
    </location>
    <ligand>
        <name>(R)-pantoate</name>
        <dbReference type="ChEBI" id="CHEBI:15980"/>
    </ligand>
</feature>
<feature type="binding site" evidence="1">
    <location>
        <position position="176"/>
    </location>
    <ligand>
        <name>ATP</name>
        <dbReference type="ChEBI" id="CHEBI:30616"/>
    </ligand>
</feature>
<feature type="binding site" evidence="1">
    <location>
        <begin position="184"/>
        <end position="187"/>
    </location>
    <ligand>
        <name>ATP</name>
        <dbReference type="ChEBI" id="CHEBI:30616"/>
    </ligand>
</feature>
<organism>
    <name type="scientific">Thermodesulfovibrio yellowstonii (strain ATCC 51303 / DSM 11347 / YP87)</name>
    <dbReference type="NCBI Taxonomy" id="289376"/>
    <lineage>
        <taxon>Bacteria</taxon>
        <taxon>Pseudomonadati</taxon>
        <taxon>Nitrospirota</taxon>
        <taxon>Thermodesulfovibrionia</taxon>
        <taxon>Thermodesulfovibrionales</taxon>
        <taxon>Thermodesulfovibrionaceae</taxon>
        <taxon>Thermodesulfovibrio</taxon>
    </lineage>
</organism>
<keyword id="KW-0067">ATP-binding</keyword>
<keyword id="KW-0963">Cytoplasm</keyword>
<keyword id="KW-0436">Ligase</keyword>
<keyword id="KW-0547">Nucleotide-binding</keyword>
<keyword id="KW-0566">Pantothenate biosynthesis</keyword>
<keyword id="KW-1185">Reference proteome</keyword>
<accession>B5YJ91</accession>
<proteinExistence type="inferred from homology"/>
<gene>
    <name evidence="1" type="primary">panC</name>
    <name type="ordered locus">THEYE_A0461</name>
</gene>